<feature type="chain" id="PRO_1000084778" description="UPF0283 membrane protein BSUIS_A1077">
    <location>
        <begin position="1"/>
        <end position="357"/>
    </location>
</feature>
<feature type="transmembrane region" description="Helical" evidence="1">
    <location>
        <begin position="78"/>
        <end position="98"/>
    </location>
</feature>
<feature type="transmembrane region" description="Helical" evidence="1">
    <location>
        <begin position="109"/>
        <end position="129"/>
    </location>
</feature>
<feature type="region of interest" description="Disordered" evidence="2">
    <location>
        <begin position="1"/>
        <end position="36"/>
    </location>
</feature>
<feature type="compositionally biased region" description="Basic and acidic residues" evidence="2">
    <location>
        <begin position="27"/>
        <end position="36"/>
    </location>
</feature>
<proteinExistence type="inferred from homology"/>
<reference key="1">
    <citation type="submission" date="2007-12" db="EMBL/GenBank/DDBJ databases">
        <title>Brucella suis ATCC 23445 whole genome shotgun sequencing project.</title>
        <authorList>
            <person name="Setubal J.C."/>
            <person name="Bowns C."/>
            <person name="Boyle S."/>
            <person name="Crasta O.R."/>
            <person name="Czar M.J."/>
            <person name="Dharmanolla C."/>
            <person name="Gillespie J.J."/>
            <person name="Kenyon R.W."/>
            <person name="Lu J."/>
            <person name="Mane S."/>
            <person name="Mohapatra S."/>
            <person name="Nagrani S."/>
            <person name="Purkayastha A."/>
            <person name="Rajasimha H.K."/>
            <person name="Shallom J.M."/>
            <person name="Shallom S."/>
            <person name="Shukla M."/>
            <person name="Snyder E.E."/>
            <person name="Sobral B.W."/>
            <person name="Wattam A.R."/>
            <person name="Will R."/>
            <person name="Williams K."/>
            <person name="Yoo H."/>
            <person name="Bruce D."/>
            <person name="Detter C."/>
            <person name="Munk C."/>
            <person name="Brettin T.S."/>
        </authorList>
    </citation>
    <scope>NUCLEOTIDE SEQUENCE [LARGE SCALE GENOMIC DNA]</scope>
    <source>
        <strain>ATCC 23445 / NCTC 10510</strain>
    </source>
</reference>
<comment type="subcellular location">
    <subcellularLocation>
        <location evidence="1">Cell inner membrane</location>
        <topology evidence="1">Multi-pass membrane protein</topology>
    </subcellularLocation>
</comment>
<comment type="similarity">
    <text evidence="1">Belongs to the UPF0283 family.</text>
</comment>
<organism>
    <name type="scientific">Brucella suis (strain ATCC 23445 / NCTC 10510)</name>
    <dbReference type="NCBI Taxonomy" id="470137"/>
    <lineage>
        <taxon>Bacteria</taxon>
        <taxon>Pseudomonadati</taxon>
        <taxon>Pseudomonadota</taxon>
        <taxon>Alphaproteobacteria</taxon>
        <taxon>Hyphomicrobiales</taxon>
        <taxon>Brucellaceae</taxon>
        <taxon>Brucella/Ochrobactrum group</taxon>
        <taxon>Brucella</taxon>
    </lineage>
</organism>
<protein>
    <recommendedName>
        <fullName evidence="1">UPF0283 membrane protein BSUIS_A1077</fullName>
    </recommendedName>
</protein>
<sequence>MSDKTPRKPTAFRLEQPARVSAASEQEEPRHPRAVKDLEQITPQADVFDLTDDEAAELEILDPAFEAPERKGWSLSRILFGALGILVSFAIGIWTEDLIRALFARADWLGWTALGVAMVALAAFAAIILRELVALRRLASVQHLRKDAADAAERDDMAAARKAVDALRTIAAGIPETAKGRQLLDSLTDDIIDGRDLIRLAETEILRPLDREARTLVLNASKRVSIVTAISTRALVDIGYVIFESARLIRRLSQLYGGRPGTLGFIKLARRVIAHLAVTGTIAMGDSVIQQLVGHGLASRLSAKLGEGVVNGLMTARIGIAAMDVVRPFPFNAEKRPGIGDFIGELARLNSDRNARK</sequence>
<keyword id="KW-0997">Cell inner membrane</keyword>
<keyword id="KW-1003">Cell membrane</keyword>
<keyword id="KW-0472">Membrane</keyword>
<keyword id="KW-0812">Transmembrane</keyword>
<keyword id="KW-1133">Transmembrane helix</keyword>
<name>Y1077_BRUSI</name>
<gene>
    <name type="ordered locus">BSUIS_A1077</name>
</gene>
<evidence type="ECO:0000255" key="1">
    <source>
        <dbReference type="HAMAP-Rule" id="MF_01085"/>
    </source>
</evidence>
<evidence type="ECO:0000256" key="2">
    <source>
        <dbReference type="SAM" id="MobiDB-lite"/>
    </source>
</evidence>
<accession>B0CGI5</accession>
<dbReference type="EMBL" id="CP000911">
    <property type="protein sequence ID" value="ABY38136.1"/>
    <property type="molecule type" value="Genomic_DNA"/>
</dbReference>
<dbReference type="RefSeq" id="WP_006072745.1">
    <property type="nucleotide sequence ID" value="NC_010169.1"/>
</dbReference>
<dbReference type="KEGG" id="bmt:BSUIS_A1077"/>
<dbReference type="HOGENOM" id="CLU_057693_1_0_5"/>
<dbReference type="Proteomes" id="UP000008545">
    <property type="component" value="Chromosome I"/>
</dbReference>
<dbReference type="GO" id="GO:0005886">
    <property type="term" value="C:plasma membrane"/>
    <property type="evidence" value="ECO:0007669"/>
    <property type="project" value="UniProtKB-SubCell"/>
</dbReference>
<dbReference type="HAMAP" id="MF_01085">
    <property type="entry name" value="UPF0283"/>
    <property type="match status" value="1"/>
</dbReference>
<dbReference type="InterPro" id="IPR021147">
    <property type="entry name" value="DUF697"/>
</dbReference>
<dbReference type="InterPro" id="IPR006507">
    <property type="entry name" value="UPF0283"/>
</dbReference>
<dbReference type="NCBIfam" id="TIGR01620">
    <property type="entry name" value="hyp_HI0043"/>
    <property type="match status" value="1"/>
</dbReference>
<dbReference type="PANTHER" id="PTHR39342">
    <property type="entry name" value="UPF0283 MEMBRANE PROTEIN YCJF"/>
    <property type="match status" value="1"/>
</dbReference>
<dbReference type="PANTHER" id="PTHR39342:SF1">
    <property type="entry name" value="UPF0283 MEMBRANE PROTEIN YCJF"/>
    <property type="match status" value="1"/>
</dbReference>
<dbReference type="Pfam" id="PF05128">
    <property type="entry name" value="DUF697"/>
    <property type="match status" value="1"/>
</dbReference>